<name>NOSO_STAAM</name>
<reference key="1">
    <citation type="journal article" date="2001" name="Lancet">
        <title>Whole genome sequencing of meticillin-resistant Staphylococcus aureus.</title>
        <authorList>
            <person name="Kuroda M."/>
            <person name="Ohta T."/>
            <person name="Uchiyama I."/>
            <person name="Baba T."/>
            <person name="Yuzawa H."/>
            <person name="Kobayashi I."/>
            <person name="Cui L."/>
            <person name="Oguchi A."/>
            <person name="Aoki K."/>
            <person name="Nagai Y."/>
            <person name="Lian J.-Q."/>
            <person name="Ito T."/>
            <person name="Kanamori M."/>
            <person name="Matsumaru H."/>
            <person name="Maruyama A."/>
            <person name="Murakami H."/>
            <person name="Hosoyama A."/>
            <person name="Mizutani-Ui Y."/>
            <person name="Takahashi N.K."/>
            <person name="Sawano T."/>
            <person name="Inoue R."/>
            <person name="Kaito C."/>
            <person name="Sekimizu K."/>
            <person name="Hirakawa H."/>
            <person name="Kuhara S."/>
            <person name="Goto S."/>
            <person name="Yabuzaki J."/>
            <person name="Kanehisa M."/>
            <person name="Yamashita A."/>
            <person name="Oshima K."/>
            <person name="Furuya K."/>
            <person name="Yoshino C."/>
            <person name="Shiba T."/>
            <person name="Hattori M."/>
            <person name="Ogasawara N."/>
            <person name="Hayashi H."/>
            <person name="Hiramatsu K."/>
        </authorList>
    </citation>
    <scope>NUCLEOTIDE SEQUENCE [LARGE SCALE GENOMIC DNA]</scope>
    <source>
        <strain>Mu50 / ATCC 700699</strain>
    </source>
</reference>
<organism>
    <name type="scientific">Staphylococcus aureus (strain Mu50 / ATCC 700699)</name>
    <dbReference type="NCBI Taxonomy" id="158878"/>
    <lineage>
        <taxon>Bacteria</taxon>
        <taxon>Bacillati</taxon>
        <taxon>Bacillota</taxon>
        <taxon>Bacilli</taxon>
        <taxon>Bacillales</taxon>
        <taxon>Staphylococcaceae</taxon>
        <taxon>Staphylococcus</taxon>
    </lineage>
</organism>
<accession>P0A092</accession>
<accession>Q99SX3</accession>
<proteinExistence type="inferred from homology"/>
<sequence>MLFKEAQAFIENMYKECHYETQIINKRLHDIELEIKETGTYTHTEEELIYGAKMAWRNSNRCIGRLFWDSLNVIDARDVTDEASFLSSITYHITQATNEGKLKPYITIYAPKDGPKIFNNQLIRYAGYDNCGDPAEKEVTRLANHLGWKGKGTNFDVLPLIYQLPNESVKFYEYPTSLIKEVPIEHNHYPKLRKLNLKWYAVPIISNMDLKIGGIVYPTAPFNGWYMVTEIGVRNFIDDYRYNLLEKVADAFEFDTLKNNSFNKDRALVELNYAVYHSFKKEGVSIVDHLTAAKQFELFERNEAQQGRQVTGKWSWLAPPLSPTLTSNYHHGYDNTVKDPNFFYKKKESNANQCPFHH</sequence>
<keyword id="KW-0349">Heme</keyword>
<keyword id="KW-0408">Iron</keyword>
<keyword id="KW-0479">Metal-binding</keyword>
<keyword id="KW-0560">Oxidoreductase</keyword>
<feature type="chain" id="PRO_0000170956" description="Nitric oxide synthase oxygenase">
    <location>
        <begin position="1"/>
        <end position="358"/>
    </location>
</feature>
<feature type="binding site" description="axial binding residue" evidence="1">
    <location>
        <position position="62"/>
    </location>
    <ligand>
        <name>heme</name>
        <dbReference type="ChEBI" id="CHEBI:30413"/>
    </ligand>
    <ligandPart>
        <name>Fe</name>
        <dbReference type="ChEBI" id="CHEBI:18248"/>
    </ligandPart>
</feature>
<comment type="function">
    <text evidence="2">Catalyzes the production of nitric oxide.</text>
</comment>
<comment type="catalytic activity">
    <reaction evidence="2">
        <text>3 reduced [flavodoxin] + 2 L-arginine + 4 O2 = 3 oxidized [flavodoxin] + 2 L-citrulline + 2 nitric oxide + 4 H2O + 5 H(+)</text>
        <dbReference type="Rhea" id="RHEA:52324"/>
        <dbReference type="Rhea" id="RHEA-COMP:10622"/>
        <dbReference type="Rhea" id="RHEA-COMP:10623"/>
        <dbReference type="ChEBI" id="CHEBI:15377"/>
        <dbReference type="ChEBI" id="CHEBI:15378"/>
        <dbReference type="ChEBI" id="CHEBI:15379"/>
        <dbReference type="ChEBI" id="CHEBI:16480"/>
        <dbReference type="ChEBI" id="CHEBI:32682"/>
        <dbReference type="ChEBI" id="CHEBI:57618"/>
        <dbReference type="ChEBI" id="CHEBI:57743"/>
        <dbReference type="ChEBI" id="CHEBI:58210"/>
        <dbReference type="EC" id="1.14.14.47"/>
    </reaction>
</comment>
<comment type="cofactor">
    <cofactor evidence="2">
        <name>heme</name>
        <dbReference type="ChEBI" id="CHEBI:30413"/>
    </cofactor>
</comment>
<comment type="cofactor">
    <cofactor evidence="2">
        <name>(6S)-5,6,7,8-tetrahydrofolate</name>
        <dbReference type="ChEBI" id="CHEBI:57453"/>
    </cofactor>
</comment>
<comment type="subunit">
    <text evidence="2">Homodimer.</text>
</comment>
<comment type="miscellaneous">
    <text>This protein is similar to the oxygenase domain of eukaryotic nitric oxide synthases but lacks the reductase domain which, in eukaryotes, is responsible for transfer of electrons to the ferric heme during nitric oxide synthesis.</text>
</comment>
<comment type="similarity">
    <text evidence="3">Belongs to the NOS family. Bacterial NOS oxygenase subfamily.</text>
</comment>
<dbReference type="EC" id="1.14.14.47" evidence="2"/>
<dbReference type="EMBL" id="BA000017">
    <property type="protein sequence ID" value="BAB58076.1"/>
    <property type="molecule type" value="Genomic_DNA"/>
</dbReference>
<dbReference type="RefSeq" id="WP_000897635.1">
    <property type="nucleotide sequence ID" value="NC_002758.2"/>
</dbReference>
<dbReference type="SMR" id="P0A092"/>
<dbReference type="KEGG" id="sav:SAV1914"/>
<dbReference type="HOGENOM" id="CLU_040293_0_0_9"/>
<dbReference type="PhylomeDB" id="P0A092"/>
<dbReference type="Proteomes" id="UP000002481">
    <property type="component" value="Chromosome"/>
</dbReference>
<dbReference type="GO" id="GO:0020037">
    <property type="term" value="F:heme binding"/>
    <property type="evidence" value="ECO:0007669"/>
    <property type="project" value="InterPro"/>
</dbReference>
<dbReference type="GO" id="GO:0046872">
    <property type="term" value="F:metal ion binding"/>
    <property type="evidence" value="ECO:0007669"/>
    <property type="project" value="UniProtKB-KW"/>
</dbReference>
<dbReference type="GO" id="GO:0004517">
    <property type="term" value="F:nitric-oxide synthase activity"/>
    <property type="evidence" value="ECO:0007669"/>
    <property type="project" value="InterPro"/>
</dbReference>
<dbReference type="GO" id="GO:0006809">
    <property type="term" value="P:nitric oxide biosynthetic process"/>
    <property type="evidence" value="ECO:0007669"/>
    <property type="project" value="InterPro"/>
</dbReference>
<dbReference type="CDD" id="cd00794">
    <property type="entry name" value="NOS_oxygenase_prok"/>
    <property type="match status" value="1"/>
</dbReference>
<dbReference type="Gene3D" id="3.90.340.10">
    <property type="entry name" value="Nitric Oxide Synthase, Chain A, domain 1"/>
    <property type="match status" value="1"/>
</dbReference>
<dbReference type="Gene3D" id="3.90.1230.10">
    <property type="entry name" value="Nitric Oxide Synthase, Chain A, domain 3"/>
    <property type="match status" value="1"/>
</dbReference>
<dbReference type="Gene3D" id="3.90.440.10">
    <property type="entry name" value="Nitric Oxide Synthase,Heme Domain,Chain A domain 2"/>
    <property type="match status" value="1"/>
</dbReference>
<dbReference type="InterPro" id="IPR017142">
    <property type="entry name" value="Nitric_oxide_synthase_Oase-su"/>
</dbReference>
<dbReference type="InterPro" id="IPR050607">
    <property type="entry name" value="NOS"/>
</dbReference>
<dbReference type="InterPro" id="IPR044943">
    <property type="entry name" value="NOS_dom_1"/>
</dbReference>
<dbReference type="InterPro" id="IPR044940">
    <property type="entry name" value="NOS_dom_2"/>
</dbReference>
<dbReference type="InterPro" id="IPR044944">
    <property type="entry name" value="NOS_dom_3"/>
</dbReference>
<dbReference type="InterPro" id="IPR004030">
    <property type="entry name" value="NOS_N"/>
</dbReference>
<dbReference type="InterPro" id="IPR036119">
    <property type="entry name" value="NOS_N_sf"/>
</dbReference>
<dbReference type="PANTHER" id="PTHR43410:SF1">
    <property type="entry name" value="NITRIC OXIDE SYNTHASE"/>
    <property type="match status" value="1"/>
</dbReference>
<dbReference type="PANTHER" id="PTHR43410">
    <property type="entry name" value="NITRIC OXIDE SYNTHASE OXYGENASE"/>
    <property type="match status" value="1"/>
</dbReference>
<dbReference type="Pfam" id="PF02898">
    <property type="entry name" value="NO_synthase"/>
    <property type="match status" value="1"/>
</dbReference>
<dbReference type="PIRSF" id="PIRSF037219">
    <property type="entry name" value="NOS_oxygenase"/>
    <property type="match status" value="1"/>
</dbReference>
<dbReference type="SUPFAM" id="SSF56512">
    <property type="entry name" value="Nitric oxide (NO) synthase oxygenase domain"/>
    <property type="match status" value="1"/>
</dbReference>
<dbReference type="PROSITE" id="PS60001">
    <property type="entry name" value="NOS"/>
    <property type="match status" value="1"/>
</dbReference>
<protein>
    <recommendedName>
        <fullName>Nitric oxide synthase oxygenase</fullName>
        <ecNumber evidence="2">1.14.14.47</ecNumber>
    </recommendedName>
    <alternativeName>
        <fullName>NOSoxy-like protein</fullName>
    </alternativeName>
    <alternativeName>
        <fullName>SANOS</fullName>
    </alternativeName>
</protein>
<gene>
    <name type="primary">nos</name>
    <name type="ordered locus">SAV1914</name>
</gene>
<evidence type="ECO:0000250" key="1"/>
<evidence type="ECO:0000250" key="2">
    <source>
        <dbReference type="UniProtKB" id="O34453"/>
    </source>
</evidence>
<evidence type="ECO:0000305" key="3"/>